<protein>
    <recommendedName>
        <fullName evidence="1">UPF0398 protein Lm4b_01906</fullName>
    </recommendedName>
</protein>
<proteinExistence type="inferred from homology"/>
<comment type="similarity">
    <text evidence="1">Belongs to the UPF0398 family.</text>
</comment>
<dbReference type="EMBL" id="FM242711">
    <property type="protein sequence ID" value="CAS05664.1"/>
    <property type="molecule type" value="Genomic_DNA"/>
</dbReference>
<dbReference type="RefSeq" id="WP_003726811.1">
    <property type="nucleotide sequence ID" value="NC_012488.1"/>
</dbReference>
<dbReference type="SMR" id="C1KWI9"/>
<dbReference type="KEGG" id="lmc:Lm4b_01906"/>
<dbReference type="HOGENOM" id="CLU_105319_0_0_9"/>
<dbReference type="Gene3D" id="3.40.50.450">
    <property type="match status" value="1"/>
</dbReference>
<dbReference type="HAMAP" id="MF_01575">
    <property type="entry name" value="UPF0398"/>
    <property type="match status" value="1"/>
</dbReference>
<dbReference type="InterPro" id="IPR010697">
    <property type="entry name" value="YspA"/>
</dbReference>
<dbReference type="NCBIfam" id="NF010181">
    <property type="entry name" value="PRK13660.1"/>
    <property type="match status" value="1"/>
</dbReference>
<dbReference type="PANTHER" id="PTHR38440:SF1">
    <property type="entry name" value="UPF0398 PROTEIN SPR0331"/>
    <property type="match status" value="1"/>
</dbReference>
<dbReference type="PANTHER" id="PTHR38440">
    <property type="entry name" value="UPF0398 PROTEIN YPSA"/>
    <property type="match status" value="1"/>
</dbReference>
<dbReference type="Pfam" id="PF06908">
    <property type="entry name" value="YpsA"/>
    <property type="match status" value="1"/>
</dbReference>
<dbReference type="PIRSF" id="PIRSF021290">
    <property type="entry name" value="DUF1273"/>
    <property type="match status" value="1"/>
</dbReference>
<dbReference type="SUPFAM" id="SSF102405">
    <property type="entry name" value="MCP/YpsA-like"/>
    <property type="match status" value="1"/>
</dbReference>
<reference key="1">
    <citation type="journal article" date="2012" name="BMC Genomics">
        <title>Comparative genomics and transcriptomics of lineages I, II, and III strains of Listeria monocytogenes.</title>
        <authorList>
            <person name="Hain T."/>
            <person name="Ghai R."/>
            <person name="Billion A."/>
            <person name="Kuenne C.T."/>
            <person name="Steinweg C."/>
            <person name="Izar B."/>
            <person name="Mohamed W."/>
            <person name="Mraheil M."/>
            <person name="Domann E."/>
            <person name="Schaffrath S."/>
            <person name="Karst U."/>
            <person name="Goesmann A."/>
            <person name="Oehm S."/>
            <person name="Puhler A."/>
            <person name="Merkl R."/>
            <person name="Vorwerk S."/>
            <person name="Glaser P."/>
            <person name="Garrido P."/>
            <person name="Rusniok C."/>
            <person name="Buchrieser C."/>
            <person name="Goebel W."/>
            <person name="Chakraborty T."/>
        </authorList>
    </citation>
    <scope>NUCLEOTIDE SEQUENCE [LARGE SCALE GENOMIC DNA]</scope>
    <source>
        <strain>CLIP80459</strain>
    </source>
</reference>
<evidence type="ECO:0000255" key="1">
    <source>
        <dbReference type="HAMAP-Rule" id="MF_01575"/>
    </source>
</evidence>
<feature type="chain" id="PRO_1000215586" description="UPF0398 protein Lm4b_01906">
    <location>
        <begin position="1"/>
        <end position="181"/>
    </location>
</feature>
<name>Y1906_LISMC</name>
<sequence length="181" mass="20745">MKSIAVTGYKNFELGIFKKDADEAVYIKETIKRHLLPLVEDGLEWVIISGQLGIELWAGDVVAELKADYPIKLAILEPFEKQSANWNEANQLWASEVLEKADYHAFITKRPYESPAQFAARDGFIIDNTDGALLVYDLEKEGSPKFFYDRAIQAKEQSNYYIDCIDFYALQEVVEDMNQTF</sequence>
<organism>
    <name type="scientific">Listeria monocytogenes serotype 4b (strain CLIP80459)</name>
    <dbReference type="NCBI Taxonomy" id="568819"/>
    <lineage>
        <taxon>Bacteria</taxon>
        <taxon>Bacillati</taxon>
        <taxon>Bacillota</taxon>
        <taxon>Bacilli</taxon>
        <taxon>Bacillales</taxon>
        <taxon>Listeriaceae</taxon>
        <taxon>Listeria</taxon>
    </lineage>
</organism>
<gene>
    <name type="ordered locus">Lm4b_01906</name>
</gene>
<accession>C1KWI9</accession>